<accession>Q8FCV7</accession>
<name>AROB_ECOL6</name>
<evidence type="ECO:0000255" key="1">
    <source>
        <dbReference type="HAMAP-Rule" id="MF_00110"/>
    </source>
</evidence>
<evidence type="ECO:0000305" key="2"/>
<protein>
    <recommendedName>
        <fullName evidence="1">3-dehydroquinate synthase</fullName>
        <shortName evidence="1">DHQS</shortName>
        <ecNumber evidence="1">4.2.3.4</ecNumber>
    </recommendedName>
</protein>
<comment type="function">
    <text evidence="1">Catalyzes the conversion of 3-deoxy-D-arabino-heptulosonate 7-phosphate (DAHP) to dehydroquinate (DHQ).</text>
</comment>
<comment type="catalytic activity">
    <reaction evidence="1">
        <text>7-phospho-2-dehydro-3-deoxy-D-arabino-heptonate = 3-dehydroquinate + phosphate</text>
        <dbReference type="Rhea" id="RHEA:21968"/>
        <dbReference type="ChEBI" id="CHEBI:32364"/>
        <dbReference type="ChEBI" id="CHEBI:43474"/>
        <dbReference type="ChEBI" id="CHEBI:58394"/>
        <dbReference type="EC" id="4.2.3.4"/>
    </reaction>
</comment>
<comment type="cofactor">
    <cofactor evidence="1">
        <name>NAD(+)</name>
        <dbReference type="ChEBI" id="CHEBI:57540"/>
    </cofactor>
</comment>
<comment type="cofactor">
    <cofactor evidence="1">
        <name>Co(2+)</name>
        <dbReference type="ChEBI" id="CHEBI:48828"/>
    </cofactor>
    <cofactor evidence="1">
        <name>Zn(2+)</name>
        <dbReference type="ChEBI" id="CHEBI:29105"/>
    </cofactor>
    <text evidence="1">Binds 1 divalent metal cation per subunit. Can use either Co(2+) or Zn(2+).</text>
</comment>
<comment type="pathway">
    <text evidence="1">Metabolic intermediate biosynthesis; chorismate biosynthesis; chorismate from D-erythrose 4-phosphate and phosphoenolpyruvate: step 2/7.</text>
</comment>
<comment type="subcellular location">
    <subcellularLocation>
        <location evidence="1">Cytoplasm</location>
    </subcellularLocation>
</comment>
<comment type="similarity">
    <text evidence="1 2">Belongs to the sugar phosphate cyclases superfamily. Dehydroquinate synthase family.</text>
</comment>
<proteinExistence type="inferred from homology"/>
<reference key="1">
    <citation type="journal article" date="2002" name="Proc. Natl. Acad. Sci. U.S.A.">
        <title>Extensive mosaic structure revealed by the complete genome sequence of uropathogenic Escherichia coli.</title>
        <authorList>
            <person name="Welch R.A."/>
            <person name="Burland V."/>
            <person name="Plunkett G. III"/>
            <person name="Redford P."/>
            <person name="Roesch P."/>
            <person name="Rasko D."/>
            <person name="Buckles E.L."/>
            <person name="Liou S.-R."/>
            <person name="Boutin A."/>
            <person name="Hackett J."/>
            <person name="Stroud D."/>
            <person name="Mayhew G.F."/>
            <person name="Rose D.J."/>
            <person name="Zhou S."/>
            <person name="Schwartz D.C."/>
            <person name="Perna N.T."/>
            <person name="Mobley H.L.T."/>
            <person name="Donnenberg M.S."/>
            <person name="Blattner F.R."/>
        </authorList>
    </citation>
    <scope>NUCLEOTIDE SEQUENCE [LARGE SCALE GENOMIC DNA]</scope>
    <source>
        <strain>CFT073 / ATCC 700928 / UPEC</strain>
    </source>
</reference>
<feature type="chain" id="PRO_0000140738" description="3-dehydroquinate synthase">
    <location>
        <begin position="1"/>
        <end position="362"/>
    </location>
</feature>
<feature type="binding site" evidence="1">
    <location>
        <begin position="71"/>
        <end position="76"/>
    </location>
    <ligand>
        <name>NAD(+)</name>
        <dbReference type="ChEBI" id="CHEBI:57540"/>
    </ligand>
</feature>
<feature type="binding site" evidence="1">
    <location>
        <begin position="105"/>
        <end position="109"/>
    </location>
    <ligand>
        <name>NAD(+)</name>
        <dbReference type="ChEBI" id="CHEBI:57540"/>
    </ligand>
</feature>
<feature type="binding site" evidence="1">
    <location>
        <begin position="129"/>
        <end position="130"/>
    </location>
    <ligand>
        <name>NAD(+)</name>
        <dbReference type="ChEBI" id="CHEBI:57540"/>
    </ligand>
</feature>
<feature type="binding site" evidence="1">
    <location>
        <position position="142"/>
    </location>
    <ligand>
        <name>NAD(+)</name>
        <dbReference type="ChEBI" id="CHEBI:57540"/>
    </ligand>
</feature>
<feature type="binding site" evidence="1">
    <location>
        <position position="151"/>
    </location>
    <ligand>
        <name>NAD(+)</name>
        <dbReference type="ChEBI" id="CHEBI:57540"/>
    </ligand>
</feature>
<feature type="binding site" evidence="1">
    <location>
        <begin position="169"/>
        <end position="172"/>
    </location>
    <ligand>
        <name>NAD(+)</name>
        <dbReference type="ChEBI" id="CHEBI:57540"/>
    </ligand>
</feature>
<feature type="binding site" evidence="1">
    <location>
        <position position="184"/>
    </location>
    <ligand>
        <name>Zn(2+)</name>
        <dbReference type="ChEBI" id="CHEBI:29105"/>
    </ligand>
</feature>
<feature type="binding site" evidence="1">
    <location>
        <position position="247"/>
    </location>
    <ligand>
        <name>Zn(2+)</name>
        <dbReference type="ChEBI" id="CHEBI:29105"/>
    </ligand>
</feature>
<feature type="binding site" evidence="1">
    <location>
        <position position="264"/>
    </location>
    <ligand>
        <name>Zn(2+)</name>
        <dbReference type="ChEBI" id="CHEBI:29105"/>
    </ligand>
</feature>
<keyword id="KW-0028">Amino-acid biosynthesis</keyword>
<keyword id="KW-0057">Aromatic amino acid biosynthesis</keyword>
<keyword id="KW-0170">Cobalt</keyword>
<keyword id="KW-0963">Cytoplasm</keyword>
<keyword id="KW-0456">Lyase</keyword>
<keyword id="KW-0479">Metal-binding</keyword>
<keyword id="KW-0520">NAD</keyword>
<keyword id="KW-0547">Nucleotide-binding</keyword>
<keyword id="KW-1185">Reference proteome</keyword>
<keyword id="KW-0862">Zinc</keyword>
<gene>
    <name evidence="1" type="primary">aroB</name>
    <name type="ordered locus">c4159</name>
</gene>
<organism>
    <name type="scientific">Escherichia coli O6:H1 (strain CFT073 / ATCC 700928 / UPEC)</name>
    <dbReference type="NCBI Taxonomy" id="199310"/>
    <lineage>
        <taxon>Bacteria</taxon>
        <taxon>Pseudomonadati</taxon>
        <taxon>Pseudomonadota</taxon>
        <taxon>Gammaproteobacteria</taxon>
        <taxon>Enterobacterales</taxon>
        <taxon>Enterobacteriaceae</taxon>
        <taxon>Escherichia</taxon>
    </lineage>
</organism>
<dbReference type="EC" id="4.2.3.4" evidence="1"/>
<dbReference type="EMBL" id="AE014075">
    <property type="protein sequence ID" value="AAN82597.1"/>
    <property type="molecule type" value="Genomic_DNA"/>
</dbReference>
<dbReference type="RefSeq" id="WP_000439850.1">
    <property type="nucleotide sequence ID" value="NZ_CP051263.1"/>
</dbReference>
<dbReference type="SMR" id="Q8FCV7"/>
<dbReference type="STRING" id="199310.c4159"/>
<dbReference type="KEGG" id="ecc:c4159"/>
<dbReference type="eggNOG" id="COG0337">
    <property type="taxonomic scope" value="Bacteria"/>
</dbReference>
<dbReference type="HOGENOM" id="CLU_001201_0_2_6"/>
<dbReference type="BioCyc" id="ECOL199310:C4159-MONOMER"/>
<dbReference type="UniPathway" id="UPA00053">
    <property type="reaction ID" value="UER00085"/>
</dbReference>
<dbReference type="Proteomes" id="UP000001410">
    <property type="component" value="Chromosome"/>
</dbReference>
<dbReference type="GO" id="GO:0005737">
    <property type="term" value="C:cytoplasm"/>
    <property type="evidence" value="ECO:0007669"/>
    <property type="project" value="UniProtKB-SubCell"/>
</dbReference>
<dbReference type="GO" id="GO:0003856">
    <property type="term" value="F:3-dehydroquinate synthase activity"/>
    <property type="evidence" value="ECO:0007669"/>
    <property type="project" value="UniProtKB-UniRule"/>
</dbReference>
<dbReference type="GO" id="GO:0046872">
    <property type="term" value="F:metal ion binding"/>
    <property type="evidence" value="ECO:0007669"/>
    <property type="project" value="UniProtKB-KW"/>
</dbReference>
<dbReference type="GO" id="GO:0000166">
    <property type="term" value="F:nucleotide binding"/>
    <property type="evidence" value="ECO:0007669"/>
    <property type="project" value="UniProtKB-KW"/>
</dbReference>
<dbReference type="GO" id="GO:0008652">
    <property type="term" value="P:amino acid biosynthetic process"/>
    <property type="evidence" value="ECO:0007669"/>
    <property type="project" value="UniProtKB-KW"/>
</dbReference>
<dbReference type="GO" id="GO:0009073">
    <property type="term" value="P:aromatic amino acid family biosynthetic process"/>
    <property type="evidence" value="ECO:0007669"/>
    <property type="project" value="UniProtKB-KW"/>
</dbReference>
<dbReference type="GO" id="GO:0009423">
    <property type="term" value="P:chorismate biosynthetic process"/>
    <property type="evidence" value="ECO:0007669"/>
    <property type="project" value="UniProtKB-UniRule"/>
</dbReference>
<dbReference type="CDD" id="cd08195">
    <property type="entry name" value="DHQS"/>
    <property type="match status" value="1"/>
</dbReference>
<dbReference type="FunFam" id="1.20.1090.10:FF:000002">
    <property type="entry name" value="3-dehydroquinate synthase"/>
    <property type="match status" value="1"/>
</dbReference>
<dbReference type="FunFam" id="3.40.50.1970:FF:000001">
    <property type="entry name" value="3-dehydroquinate synthase"/>
    <property type="match status" value="1"/>
</dbReference>
<dbReference type="Gene3D" id="3.40.50.1970">
    <property type="match status" value="1"/>
</dbReference>
<dbReference type="Gene3D" id="1.20.1090.10">
    <property type="entry name" value="Dehydroquinate synthase-like - alpha domain"/>
    <property type="match status" value="1"/>
</dbReference>
<dbReference type="HAMAP" id="MF_00110">
    <property type="entry name" value="DHQ_synthase"/>
    <property type="match status" value="1"/>
</dbReference>
<dbReference type="InterPro" id="IPR050071">
    <property type="entry name" value="Dehydroquinate_synthase"/>
</dbReference>
<dbReference type="InterPro" id="IPR016037">
    <property type="entry name" value="DHQ_synth_AroB"/>
</dbReference>
<dbReference type="InterPro" id="IPR030963">
    <property type="entry name" value="DHQ_synth_fam"/>
</dbReference>
<dbReference type="InterPro" id="IPR030960">
    <property type="entry name" value="DHQS/DOIS_N"/>
</dbReference>
<dbReference type="InterPro" id="IPR056179">
    <property type="entry name" value="DHQS_C"/>
</dbReference>
<dbReference type="NCBIfam" id="TIGR01357">
    <property type="entry name" value="aroB"/>
    <property type="match status" value="1"/>
</dbReference>
<dbReference type="PANTHER" id="PTHR43622">
    <property type="entry name" value="3-DEHYDROQUINATE SYNTHASE"/>
    <property type="match status" value="1"/>
</dbReference>
<dbReference type="PANTHER" id="PTHR43622:SF7">
    <property type="entry name" value="3-DEHYDROQUINATE SYNTHASE, CHLOROPLASTIC"/>
    <property type="match status" value="1"/>
</dbReference>
<dbReference type="Pfam" id="PF01761">
    <property type="entry name" value="DHQ_synthase"/>
    <property type="match status" value="1"/>
</dbReference>
<dbReference type="Pfam" id="PF24621">
    <property type="entry name" value="DHQS_C"/>
    <property type="match status" value="1"/>
</dbReference>
<dbReference type="PIRSF" id="PIRSF001455">
    <property type="entry name" value="DHQ_synth"/>
    <property type="match status" value="1"/>
</dbReference>
<dbReference type="SUPFAM" id="SSF56796">
    <property type="entry name" value="Dehydroquinate synthase-like"/>
    <property type="match status" value="1"/>
</dbReference>
<sequence>MERIVVTLGERSYPITIASGLFNEPASFLPLKSGEQVMLVTNETLAPLYLDKVRGVLEQAGVNVDSVILPDGEQYKSLAVLDTVFTALLQKPHGRDTTLVALGGGVVGDLTGFAAASYQRGVRFIQVPTTLLSQVDSSVGGKTAVNHPLGKNMIGAFYQPASVVVDLDCLKTLPPRELASGLAEVIKYGIILDGAFFNWLEENLDALLRLDGPAMAYCIRRCCELKAEVVAADERETGLRALLNLGHTFGHAIEAEMGYGNWLHGEAVAAGMVMAARTSERLGQFSSAETQRIITLLTRAGLPVNGPREMSAQAYLPHMLRDKKVLAGEMRLILPLAIGKSEVRSGVSHELVLNAIADCQSA</sequence>